<protein>
    <recommendedName>
        <fullName evidence="7">GATA-type transcription factor sre</fullName>
    </recommendedName>
    <alternativeName>
        <fullName evidence="7">Siderophore uptake regulator sreA</fullName>
    </alternativeName>
</protein>
<keyword id="KW-0175">Coiled coil</keyword>
<keyword id="KW-0479">Metal-binding</keyword>
<keyword id="KW-0539">Nucleus</keyword>
<keyword id="KW-1185">Reference proteome</keyword>
<keyword id="KW-0677">Repeat</keyword>
<keyword id="KW-0804">Transcription</keyword>
<keyword id="KW-0805">Transcription regulation</keyword>
<keyword id="KW-0862">Zinc</keyword>
<keyword id="KW-0863">Zinc-finger</keyword>
<name>SREA_NEUCR</name>
<dbReference type="EMBL" id="CM002239">
    <property type="protein sequence ID" value="EAA32742.1"/>
    <property type="molecule type" value="Genomic_DNA"/>
</dbReference>
<dbReference type="RefSeq" id="XP_961978.1">
    <property type="nucleotide sequence ID" value="XM_956885.2"/>
</dbReference>
<dbReference type="SMR" id="Q1K8E7"/>
<dbReference type="FunCoup" id="Q1K8E7">
    <property type="interactions" value="393"/>
</dbReference>
<dbReference type="STRING" id="367110.Q1K8E7"/>
<dbReference type="PaxDb" id="5141-EFNCRP00000008012"/>
<dbReference type="EnsemblFungi" id="EAA32742">
    <property type="protein sequence ID" value="EAA32742"/>
    <property type="gene ID" value="NCU07728"/>
</dbReference>
<dbReference type="GeneID" id="3878126"/>
<dbReference type="KEGG" id="ncr:NCU07728"/>
<dbReference type="VEuPathDB" id="FungiDB:NCU07728"/>
<dbReference type="HOGENOM" id="CLU_021761_1_0_1"/>
<dbReference type="InParanoid" id="Q1K8E7"/>
<dbReference type="OMA" id="CYRPTTM"/>
<dbReference type="OrthoDB" id="515401at2759"/>
<dbReference type="Proteomes" id="UP000001805">
    <property type="component" value="Chromosome 4, Linkage Group IV"/>
</dbReference>
<dbReference type="GO" id="GO:0005634">
    <property type="term" value="C:nucleus"/>
    <property type="evidence" value="ECO:0000318"/>
    <property type="project" value="GO_Central"/>
</dbReference>
<dbReference type="GO" id="GO:0000981">
    <property type="term" value="F:DNA-binding transcription factor activity, RNA polymerase II-specific"/>
    <property type="evidence" value="ECO:0000318"/>
    <property type="project" value="GO_Central"/>
</dbReference>
<dbReference type="GO" id="GO:0000978">
    <property type="term" value="F:RNA polymerase II cis-regulatory region sequence-specific DNA binding"/>
    <property type="evidence" value="ECO:0000318"/>
    <property type="project" value="GO_Central"/>
</dbReference>
<dbReference type="GO" id="GO:0008270">
    <property type="term" value="F:zinc ion binding"/>
    <property type="evidence" value="ECO:0007669"/>
    <property type="project" value="UniProtKB-KW"/>
</dbReference>
<dbReference type="GO" id="GO:0000122">
    <property type="term" value="P:negative regulation of transcription by RNA polymerase II"/>
    <property type="evidence" value="ECO:0000318"/>
    <property type="project" value="GO_Central"/>
</dbReference>
<dbReference type="GO" id="GO:0045944">
    <property type="term" value="P:positive regulation of transcription by RNA polymerase II"/>
    <property type="evidence" value="ECO:0000318"/>
    <property type="project" value="GO_Central"/>
</dbReference>
<dbReference type="CDD" id="cd00202">
    <property type="entry name" value="ZnF_GATA"/>
    <property type="match status" value="2"/>
</dbReference>
<dbReference type="FunFam" id="3.30.50.10:FF:000007">
    <property type="entry name" value="Nitrogen regulatory AreA, N-terminal"/>
    <property type="match status" value="1"/>
</dbReference>
<dbReference type="FunFam" id="3.30.50.10:FF:000039">
    <property type="entry name" value="Siderophore transcription factor SreA"/>
    <property type="match status" value="1"/>
</dbReference>
<dbReference type="Gene3D" id="3.30.50.10">
    <property type="entry name" value="Erythroid Transcription Factor GATA-1, subunit A"/>
    <property type="match status" value="2"/>
</dbReference>
<dbReference type="InterPro" id="IPR039355">
    <property type="entry name" value="Transcription_factor_GATA"/>
</dbReference>
<dbReference type="InterPro" id="IPR000679">
    <property type="entry name" value="Znf_GATA"/>
</dbReference>
<dbReference type="InterPro" id="IPR013088">
    <property type="entry name" value="Znf_NHR/GATA"/>
</dbReference>
<dbReference type="PANTHER" id="PTHR10071:SF335">
    <property type="entry name" value="IRON-SENSING TRANSCRIPTIONAL REPRESSOR-RELATED"/>
    <property type="match status" value="1"/>
</dbReference>
<dbReference type="PANTHER" id="PTHR10071">
    <property type="entry name" value="TRANSCRIPTION FACTOR GATA FAMILY MEMBER"/>
    <property type="match status" value="1"/>
</dbReference>
<dbReference type="Pfam" id="PF00320">
    <property type="entry name" value="GATA"/>
    <property type="match status" value="2"/>
</dbReference>
<dbReference type="PRINTS" id="PR00619">
    <property type="entry name" value="GATAZNFINGER"/>
</dbReference>
<dbReference type="SMART" id="SM00401">
    <property type="entry name" value="ZnF_GATA"/>
    <property type="match status" value="2"/>
</dbReference>
<dbReference type="SUPFAM" id="SSF57716">
    <property type="entry name" value="Glucocorticoid receptor-like (DNA-binding domain)"/>
    <property type="match status" value="2"/>
</dbReference>
<dbReference type="PROSITE" id="PS00344">
    <property type="entry name" value="GATA_ZN_FINGER_1"/>
    <property type="match status" value="2"/>
</dbReference>
<dbReference type="PROSITE" id="PS50114">
    <property type="entry name" value="GATA_ZN_FINGER_2"/>
    <property type="match status" value="2"/>
</dbReference>
<accession>Q1K8E7</accession>
<sequence>MALPDDTRLMNNQTSIEGNSAPDRMALPSRPPPPTASNEPPEHESTGPVDEAASKSESGLSPNSKKAGHAAQSPSGRKKSPKIQNAQPAQSPAETVGVVNVATLGLVPSVQGHAGQVCSNCGTTHTPLWRRSPQGAIICNACGLYLKARNAARPANIRRPPSVMASNVRQAAAKLSPKKATAPLLPSNPGATYVAADQTPSGSCPGGGRCNGTGGAEGCGGCPAYNNRVSKSASLNVLKCQGAAAASSKKPQAAEGSGEEPTEMDITALHVQSQNTTVVIACQNCGTTITPLWRRDEAGHTICNACGLYYKLHGVHRPVTMKKAIIKRRKRVIPAAGGDAEIEPSEAPDSPPATSEPPMEKGTVNEDGSVNLGIRRRSVRPLTLVPEDELRRNRQASPLSSAALGQYHSSHTNQPHHGAHASLTYENRLAPIHSLALPVDRQASISPASFLSPSRKRSISAVENEPSSHNDNESHKRLSSIKSILNPMPSSEIHREVSPADQLRMQPASRSPAMSSLTPAHSPGSFSNSTVIGTPTSAPILRSASRDTHNDSERMKAERRAALEREAEMMRELLAAKERELAELGYD</sequence>
<organism>
    <name type="scientific">Neurospora crassa (strain ATCC 24698 / 74-OR23-1A / CBS 708.71 / DSM 1257 / FGSC 987)</name>
    <dbReference type="NCBI Taxonomy" id="367110"/>
    <lineage>
        <taxon>Eukaryota</taxon>
        <taxon>Fungi</taxon>
        <taxon>Dikarya</taxon>
        <taxon>Ascomycota</taxon>
        <taxon>Pezizomycotina</taxon>
        <taxon>Sordariomycetes</taxon>
        <taxon>Sordariomycetidae</taxon>
        <taxon>Sordariales</taxon>
        <taxon>Sordariaceae</taxon>
        <taxon>Neurospora</taxon>
    </lineage>
</organism>
<reference key="1">
    <citation type="journal article" date="2003" name="Nature">
        <title>The genome sequence of the filamentous fungus Neurospora crassa.</title>
        <authorList>
            <person name="Galagan J.E."/>
            <person name="Calvo S.E."/>
            <person name="Borkovich K.A."/>
            <person name="Selker E.U."/>
            <person name="Read N.D."/>
            <person name="Jaffe D.B."/>
            <person name="FitzHugh W."/>
            <person name="Ma L.-J."/>
            <person name="Smirnov S."/>
            <person name="Purcell S."/>
            <person name="Rehman B."/>
            <person name="Elkins T."/>
            <person name="Engels R."/>
            <person name="Wang S."/>
            <person name="Nielsen C.B."/>
            <person name="Butler J."/>
            <person name="Endrizzi M."/>
            <person name="Qui D."/>
            <person name="Ianakiev P."/>
            <person name="Bell-Pedersen D."/>
            <person name="Nelson M.A."/>
            <person name="Werner-Washburne M."/>
            <person name="Selitrennikoff C.P."/>
            <person name="Kinsey J.A."/>
            <person name="Braun E.L."/>
            <person name="Zelter A."/>
            <person name="Schulte U."/>
            <person name="Kothe G.O."/>
            <person name="Jedd G."/>
            <person name="Mewes H.-W."/>
            <person name="Staben C."/>
            <person name="Marcotte E."/>
            <person name="Greenberg D."/>
            <person name="Roy A."/>
            <person name="Foley K."/>
            <person name="Naylor J."/>
            <person name="Stange-Thomann N."/>
            <person name="Barrett R."/>
            <person name="Gnerre S."/>
            <person name="Kamal M."/>
            <person name="Kamvysselis M."/>
            <person name="Mauceli E.W."/>
            <person name="Bielke C."/>
            <person name="Rudd S."/>
            <person name="Frishman D."/>
            <person name="Krystofova S."/>
            <person name="Rasmussen C."/>
            <person name="Metzenberg R.L."/>
            <person name="Perkins D.D."/>
            <person name="Kroken S."/>
            <person name="Cogoni C."/>
            <person name="Macino G."/>
            <person name="Catcheside D.E.A."/>
            <person name="Li W."/>
            <person name="Pratt R.J."/>
            <person name="Osmani S.A."/>
            <person name="DeSouza C.P.C."/>
            <person name="Glass N.L."/>
            <person name="Orbach M.J."/>
            <person name="Berglund J.A."/>
            <person name="Voelker R."/>
            <person name="Yarden O."/>
            <person name="Plamann M."/>
            <person name="Seiler S."/>
            <person name="Dunlap J.C."/>
            <person name="Radford A."/>
            <person name="Aramayo R."/>
            <person name="Natvig D.O."/>
            <person name="Alex L.A."/>
            <person name="Mannhaupt G."/>
            <person name="Ebbole D.J."/>
            <person name="Freitag M."/>
            <person name="Paulsen I."/>
            <person name="Sachs M.S."/>
            <person name="Lander E.S."/>
            <person name="Nusbaum C."/>
            <person name="Birren B.W."/>
        </authorList>
    </citation>
    <scope>NUCLEOTIDE SEQUENCE [LARGE SCALE GENOMIC DNA]</scope>
    <source>
        <strain>ATCC 24698 / 74-OR23-1A / CBS 708.71 / DSM 1257 / FGSC 987</strain>
    </source>
</reference>
<reference key="2">
    <citation type="journal article" date="1998" name="Mol. Gen. Genet.">
        <title>Isolation and characterization of a new gene, sre, which encodes a GATA-type regulatory protein that controls iron transport in Neurospora crassa.</title>
        <authorList>
            <person name="Zhou L.W."/>
            <person name="Haas H."/>
            <person name="Marzluf G.A."/>
        </authorList>
    </citation>
    <scope>FUNCTION</scope>
    <scope>DISRUPTION PHENOTYPE</scope>
    <scope>INDUCTION</scope>
</reference>
<reference key="3">
    <citation type="journal article" date="1999" name="Biochemistry">
        <title>Functional analysis of the two zinc fingers of SRE, a GATA-type factor that negatively regulates siderophore synthesis in Neurospora crassa.</title>
        <authorList>
            <person name="Zhou L."/>
            <person name="Marzluf G.A."/>
        </authorList>
    </citation>
    <scope>FUNCTION</scope>
    <scope>DNA-BINDING</scope>
    <scope>DOMAIN</scope>
    <scope>MUTAGENESIS OF 284-ASN--GLY-286 AND 305-ALA-CYS-306</scope>
</reference>
<reference key="4">
    <citation type="journal article" date="2002" name="Biochemistry">
        <title>Characterization of DNA binding and the cysteine rich region of SRE, a GATA factor in Neurospora crassa involved in siderophore synthesis.</title>
        <authorList>
            <person name="Harrison K.A."/>
            <person name="Marzluf G.A."/>
        </authorList>
    </citation>
    <scope>FUNCTION</scope>
    <scope>DNA-BINDING</scope>
    <scope>DOMAIN</scope>
    <scope>MUTAGENESIS OF CYS-204; CYS-210; CYS-219 AND CYS-222</scope>
</reference>
<gene>
    <name evidence="7" type="primary">sre</name>
    <name type="ORF">NCU07728</name>
</gene>
<feature type="chain" id="PRO_0000444399" description="GATA-type transcription factor sre">
    <location>
        <begin position="1"/>
        <end position="587"/>
    </location>
</feature>
<feature type="zinc finger region" description="GATA-type 1" evidence="2">
    <location>
        <begin position="118"/>
        <end position="142"/>
    </location>
</feature>
<feature type="zinc finger region" description="GATA-type 2" evidence="2">
    <location>
        <begin position="282"/>
        <end position="306"/>
    </location>
</feature>
<feature type="region of interest" description="Disordered" evidence="3">
    <location>
        <begin position="1"/>
        <end position="94"/>
    </location>
</feature>
<feature type="region of interest" description="Cystein-rich region (CRR)" evidence="5">
    <location>
        <begin position="204"/>
        <end position="222"/>
    </location>
</feature>
<feature type="region of interest" description="Disordered" evidence="3">
    <location>
        <begin position="335"/>
        <end position="375"/>
    </location>
</feature>
<feature type="region of interest" description="Disordered" evidence="3">
    <location>
        <begin position="448"/>
        <end position="561"/>
    </location>
</feature>
<feature type="coiled-coil region" evidence="1">
    <location>
        <begin position="553"/>
        <end position="585"/>
    </location>
</feature>
<feature type="compositionally biased region" description="Polar residues" evidence="3">
    <location>
        <begin position="9"/>
        <end position="18"/>
    </location>
</feature>
<feature type="compositionally biased region" description="Polar residues" evidence="3">
    <location>
        <begin position="55"/>
        <end position="64"/>
    </location>
</feature>
<feature type="compositionally biased region" description="Polar residues" evidence="3">
    <location>
        <begin position="82"/>
        <end position="93"/>
    </location>
</feature>
<feature type="compositionally biased region" description="Basic and acidic residues" evidence="3">
    <location>
        <begin position="466"/>
        <end position="476"/>
    </location>
</feature>
<feature type="compositionally biased region" description="Polar residues" evidence="3">
    <location>
        <begin position="508"/>
        <end position="537"/>
    </location>
</feature>
<feature type="compositionally biased region" description="Basic and acidic residues" evidence="3">
    <location>
        <begin position="544"/>
        <end position="561"/>
    </location>
</feature>
<feature type="mutagenesis site" description="Decreases DNA-binding and fails to exhibit iron-mediated regulation of siderophore synthesis; when associated with S-210." evidence="5">
    <original>C</original>
    <variation>S</variation>
    <location>
        <position position="204"/>
    </location>
</feature>
<feature type="mutagenesis site" description="Decreases DNA-binding and fails to exhibit iron-mediated regulation of siderophore synthesis; when associated with S-204." evidence="5">
    <original>C</original>
    <variation>S</variation>
    <location>
        <position position="210"/>
    </location>
</feature>
<feature type="mutagenesis site" description="Decreases DNA-binding and fails to exhibit iron-mediated regulation of siderophore synthesis; when associated with S-222." evidence="5">
    <original>C</original>
    <variation>S</variation>
    <location>
        <position position="219"/>
    </location>
</feature>
<feature type="mutagenesis site" description="Decreases DNA-binding and fails to exhibit iron-mediated regulation of siderophore synthesis; when associated with S-219." evidence="5">
    <original>C</original>
    <variation>S</variation>
    <location>
        <position position="222"/>
    </location>
</feature>
<feature type="mutagenesis site" description="Decreases the DNA-binding and the subsequent transcription repressor activity." evidence="4">
    <original>NCG</original>
    <variation>LAF</variation>
    <location>
        <begin position="284"/>
        <end position="286"/>
    </location>
</feature>
<feature type="mutagenesis site" description="Decreases the DNA-binding and the subsequent transcription repressor activity." evidence="4">
    <original>AC</original>
    <variation>EL</variation>
    <location>
        <begin position="305"/>
        <end position="306"/>
    </location>
</feature>
<comment type="function">
    <text evidence="4 5 6">GATA-type transcription repressor that regulates iron- acquisition genes through specific binding the GATA sequence elements of target promoters in a zinc-dependent manner (PubMed:10194352, PubMed:12484767, PubMed:9790585). Iron acquisition regulation is critical for survival under both iron-limiting conditions (to acquire essential iron) and iron-replete conditions (to limit iron toxicity) (PubMed:10194352). Represses the synthesis of siderophores in high iron conditions (PubMed:9790585).</text>
</comment>
<comment type="subcellular location">
    <subcellularLocation>
        <location evidence="8">Nucleus</location>
    </subcellularLocation>
</comment>
<comment type="induction">
    <text evidence="6">The promoter contains a number of GATA sequences; however, expression occurs in a constitutive fashion and is not regulated by the concentration of iron available to the cells (PubMed:9790585).</text>
</comment>
<comment type="domain">
    <text evidence="5">The conserved cystein-rich region (CRR) localized between the zinc fingers is also involved in DNA-binding and transcription repressor activity (PubMed:12484767).</text>
</comment>
<comment type="domain">
    <text evidence="4">Both the N-terminal and C-terminal zinc fingers are involved in DNA-binding, although the C-terminal finger plays a more important role in the binding (PubMed:10194352).</text>
</comment>
<comment type="disruption phenotype">
    <text evidence="6">Derepresses siderophore biosynthesis in high iron concentrations (PubMed:9790585).</text>
</comment>
<evidence type="ECO:0000255" key="1"/>
<evidence type="ECO:0000255" key="2">
    <source>
        <dbReference type="PROSITE-ProRule" id="PRU00094"/>
    </source>
</evidence>
<evidence type="ECO:0000256" key="3">
    <source>
        <dbReference type="SAM" id="MobiDB-lite"/>
    </source>
</evidence>
<evidence type="ECO:0000269" key="4">
    <source>
    </source>
</evidence>
<evidence type="ECO:0000269" key="5">
    <source>
    </source>
</evidence>
<evidence type="ECO:0000269" key="6">
    <source>
    </source>
</evidence>
<evidence type="ECO:0000303" key="7">
    <source>
    </source>
</evidence>
<evidence type="ECO:0000305" key="8"/>
<proteinExistence type="evidence at protein level"/>